<keyword id="KW-0004">4Fe-4S</keyword>
<keyword id="KW-0408">Iron</keyword>
<keyword id="KW-0411">Iron-sulfur</keyword>
<keyword id="KW-0414">Isoprene biosynthesis</keyword>
<keyword id="KW-0479">Metal-binding</keyword>
<keyword id="KW-0560">Oxidoreductase</keyword>
<keyword id="KW-1185">Reference proteome</keyword>
<evidence type="ECO:0000255" key="1">
    <source>
        <dbReference type="HAMAP-Rule" id="MF_00191"/>
    </source>
</evidence>
<proteinExistence type="inferred from homology"/>
<sequence length="280" mass="30394">MRVILAKRAGFCFGVKRATQMAFEAAGMDKKTYTLGPIIHSPQVVKKLEEMGVRALKDLDSMDSGTIIIRSHGVASHEIAEAMQKKLEIVDATCPFVKKAQEHVKSLSETGYGVVVVGDADHPEVQGIVSYGGDKVFVVGSGEEVRKLPIMNKIGVVAQTTQSFENLKNVVSECLQRGGEIRVFNTICDATAVRQEEAKELARQVDCMLVVGGFNSANTRRLAEVCAELQPRTHHIETAAEIDPAWFEGVATVGVTAGASTPKWIIDEVMGRIGEINKKN</sequence>
<feature type="chain" id="PRO_1000021148" description="4-hydroxy-3-methylbut-2-enyl diphosphate reductase">
    <location>
        <begin position="1"/>
        <end position="280"/>
    </location>
</feature>
<feature type="active site" description="Proton donor" evidence="1">
    <location>
        <position position="124"/>
    </location>
</feature>
<feature type="binding site" evidence="1">
    <location>
        <position position="12"/>
    </location>
    <ligand>
        <name>[4Fe-4S] cluster</name>
        <dbReference type="ChEBI" id="CHEBI:49883"/>
    </ligand>
</feature>
<feature type="binding site" evidence="1">
    <location>
        <position position="40"/>
    </location>
    <ligand>
        <name>(2E)-4-hydroxy-3-methylbut-2-enyl diphosphate</name>
        <dbReference type="ChEBI" id="CHEBI:128753"/>
    </ligand>
</feature>
<feature type="binding site" evidence="1">
    <location>
        <position position="40"/>
    </location>
    <ligand>
        <name>dimethylallyl diphosphate</name>
        <dbReference type="ChEBI" id="CHEBI:57623"/>
    </ligand>
</feature>
<feature type="binding site" evidence="1">
    <location>
        <position position="40"/>
    </location>
    <ligand>
        <name>isopentenyl diphosphate</name>
        <dbReference type="ChEBI" id="CHEBI:128769"/>
    </ligand>
</feature>
<feature type="binding site" evidence="1">
    <location>
        <position position="72"/>
    </location>
    <ligand>
        <name>(2E)-4-hydroxy-3-methylbut-2-enyl diphosphate</name>
        <dbReference type="ChEBI" id="CHEBI:128753"/>
    </ligand>
</feature>
<feature type="binding site" evidence="1">
    <location>
        <position position="72"/>
    </location>
    <ligand>
        <name>dimethylallyl diphosphate</name>
        <dbReference type="ChEBI" id="CHEBI:57623"/>
    </ligand>
</feature>
<feature type="binding site" evidence="1">
    <location>
        <position position="72"/>
    </location>
    <ligand>
        <name>isopentenyl diphosphate</name>
        <dbReference type="ChEBI" id="CHEBI:128769"/>
    </ligand>
</feature>
<feature type="binding site" evidence="1">
    <location>
        <position position="94"/>
    </location>
    <ligand>
        <name>[4Fe-4S] cluster</name>
        <dbReference type="ChEBI" id="CHEBI:49883"/>
    </ligand>
</feature>
<feature type="binding site" evidence="1">
    <location>
        <position position="122"/>
    </location>
    <ligand>
        <name>(2E)-4-hydroxy-3-methylbut-2-enyl diphosphate</name>
        <dbReference type="ChEBI" id="CHEBI:128753"/>
    </ligand>
</feature>
<feature type="binding site" evidence="1">
    <location>
        <position position="122"/>
    </location>
    <ligand>
        <name>dimethylallyl diphosphate</name>
        <dbReference type="ChEBI" id="CHEBI:57623"/>
    </ligand>
</feature>
<feature type="binding site" evidence="1">
    <location>
        <position position="122"/>
    </location>
    <ligand>
        <name>isopentenyl diphosphate</name>
        <dbReference type="ChEBI" id="CHEBI:128769"/>
    </ligand>
</feature>
<feature type="binding site" evidence="1">
    <location>
        <position position="160"/>
    </location>
    <ligand>
        <name>(2E)-4-hydroxy-3-methylbut-2-enyl diphosphate</name>
        <dbReference type="ChEBI" id="CHEBI:128753"/>
    </ligand>
</feature>
<feature type="binding site" evidence="1">
    <location>
        <position position="188"/>
    </location>
    <ligand>
        <name>[4Fe-4S] cluster</name>
        <dbReference type="ChEBI" id="CHEBI:49883"/>
    </ligand>
</feature>
<feature type="binding site" evidence="1">
    <location>
        <position position="216"/>
    </location>
    <ligand>
        <name>(2E)-4-hydroxy-3-methylbut-2-enyl diphosphate</name>
        <dbReference type="ChEBI" id="CHEBI:128753"/>
    </ligand>
</feature>
<feature type="binding site" evidence="1">
    <location>
        <position position="216"/>
    </location>
    <ligand>
        <name>dimethylallyl diphosphate</name>
        <dbReference type="ChEBI" id="CHEBI:57623"/>
    </ligand>
</feature>
<feature type="binding site" evidence="1">
    <location>
        <position position="216"/>
    </location>
    <ligand>
        <name>isopentenyl diphosphate</name>
        <dbReference type="ChEBI" id="CHEBI:128769"/>
    </ligand>
</feature>
<feature type="binding site" evidence="1">
    <location>
        <position position="218"/>
    </location>
    <ligand>
        <name>(2E)-4-hydroxy-3-methylbut-2-enyl diphosphate</name>
        <dbReference type="ChEBI" id="CHEBI:128753"/>
    </ligand>
</feature>
<feature type="binding site" evidence="1">
    <location>
        <position position="218"/>
    </location>
    <ligand>
        <name>dimethylallyl diphosphate</name>
        <dbReference type="ChEBI" id="CHEBI:57623"/>
    </ligand>
</feature>
<feature type="binding site" evidence="1">
    <location>
        <position position="218"/>
    </location>
    <ligand>
        <name>isopentenyl diphosphate</name>
        <dbReference type="ChEBI" id="CHEBI:128769"/>
    </ligand>
</feature>
<feature type="binding site" evidence="1">
    <location>
        <position position="260"/>
    </location>
    <ligand>
        <name>(2E)-4-hydroxy-3-methylbut-2-enyl diphosphate</name>
        <dbReference type="ChEBI" id="CHEBI:128753"/>
    </ligand>
</feature>
<feature type="binding site" evidence="1">
    <location>
        <position position="260"/>
    </location>
    <ligand>
        <name>dimethylallyl diphosphate</name>
        <dbReference type="ChEBI" id="CHEBI:57623"/>
    </ligand>
</feature>
<feature type="binding site" evidence="1">
    <location>
        <position position="260"/>
    </location>
    <ligand>
        <name>isopentenyl diphosphate</name>
        <dbReference type="ChEBI" id="CHEBI:128769"/>
    </ligand>
</feature>
<organism>
    <name type="scientific">Pelobacter propionicus (strain DSM 2379 / NBRC 103807 / OttBd1)</name>
    <dbReference type="NCBI Taxonomy" id="338966"/>
    <lineage>
        <taxon>Bacteria</taxon>
        <taxon>Pseudomonadati</taxon>
        <taxon>Thermodesulfobacteriota</taxon>
        <taxon>Desulfuromonadia</taxon>
        <taxon>Desulfuromonadales</taxon>
        <taxon>Desulfuromonadaceae</taxon>
        <taxon>Pelobacter</taxon>
    </lineage>
</organism>
<comment type="function">
    <text evidence="1">Catalyzes the conversion of 1-hydroxy-2-methyl-2-(E)-butenyl 4-diphosphate (HMBPP) into a mixture of isopentenyl diphosphate (IPP) and dimethylallyl diphosphate (DMAPP). Acts in the terminal step of the DOXP/MEP pathway for isoprenoid precursor biosynthesis.</text>
</comment>
<comment type="catalytic activity">
    <reaction evidence="1">
        <text>isopentenyl diphosphate + 2 oxidized [2Fe-2S]-[ferredoxin] + H2O = (2E)-4-hydroxy-3-methylbut-2-enyl diphosphate + 2 reduced [2Fe-2S]-[ferredoxin] + 2 H(+)</text>
        <dbReference type="Rhea" id="RHEA:24488"/>
        <dbReference type="Rhea" id="RHEA-COMP:10000"/>
        <dbReference type="Rhea" id="RHEA-COMP:10001"/>
        <dbReference type="ChEBI" id="CHEBI:15377"/>
        <dbReference type="ChEBI" id="CHEBI:15378"/>
        <dbReference type="ChEBI" id="CHEBI:33737"/>
        <dbReference type="ChEBI" id="CHEBI:33738"/>
        <dbReference type="ChEBI" id="CHEBI:128753"/>
        <dbReference type="ChEBI" id="CHEBI:128769"/>
        <dbReference type="EC" id="1.17.7.4"/>
    </reaction>
</comment>
<comment type="catalytic activity">
    <reaction evidence="1">
        <text>dimethylallyl diphosphate + 2 oxidized [2Fe-2S]-[ferredoxin] + H2O = (2E)-4-hydroxy-3-methylbut-2-enyl diphosphate + 2 reduced [2Fe-2S]-[ferredoxin] + 2 H(+)</text>
        <dbReference type="Rhea" id="RHEA:24825"/>
        <dbReference type="Rhea" id="RHEA-COMP:10000"/>
        <dbReference type="Rhea" id="RHEA-COMP:10001"/>
        <dbReference type="ChEBI" id="CHEBI:15377"/>
        <dbReference type="ChEBI" id="CHEBI:15378"/>
        <dbReference type="ChEBI" id="CHEBI:33737"/>
        <dbReference type="ChEBI" id="CHEBI:33738"/>
        <dbReference type="ChEBI" id="CHEBI:57623"/>
        <dbReference type="ChEBI" id="CHEBI:128753"/>
        <dbReference type="EC" id="1.17.7.4"/>
    </reaction>
</comment>
<comment type="cofactor">
    <cofactor evidence="1">
        <name>[4Fe-4S] cluster</name>
        <dbReference type="ChEBI" id="CHEBI:49883"/>
    </cofactor>
    <text evidence="1">Binds 1 [4Fe-4S] cluster per subunit.</text>
</comment>
<comment type="pathway">
    <text evidence="1">Isoprenoid biosynthesis; dimethylallyl diphosphate biosynthesis; dimethylallyl diphosphate from (2E)-4-hydroxy-3-methylbutenyl diphosphate: step 1/1.</text>
</comment>
<comment type="pathway">
    <text evidence="1">Isoprenoid biosynthesis; isopentenyl diphosphate biosynthesis via DXP pathway; isopentenyl diphosphate from 1-deoxy-D-xylulose 5-phosphate: step 6/6.</text>
</comment>
<comment type="similarity">
    <text evidence="1">Belongs to the IspH family.</text>
</comment>
<name>ISPH_PELPD</name>
<accession>A1ANP9</accession>
<gene>
    <name evidence="1" type="primary">ispH</name>
    <name type="ordered locus">Ppro_1349</name>
</gene>
<reference key="1">
    <citation type="submission" date="2006-10" db="EMBL/GenBank/DDBJ databases">
        <title>Complete sequence of chromosome of Pelobacter propionicus DSM 2379.</title>
        <authorList>
            <consortium name="US DOE Joint Genome Institute"/>
            <person name="Copeland A."/>
            <person name="Lucas S."/>
            <person name="Lapidus A."/>
            <person name="Barry K."/>
            <person name="Detter J.C."/>
            <person name="Glavina del Rio T."/>
            <person name="Hammon N."/>
            <person name="Israni S."/>
            <person name="Dalin E."/>
            <person name="Tice H."/>
            <person name="Pitluck S."/>
            <person name="Saunders E."/>
            <person name="Brettin T."/>
            <person name="Bruce D."/>
            <person name="Han C."/>
            <person name="Tapia R."/>
            <person name="Schmutz J."/>
            <person name="Larimer F."/>
            <person name="Land M."/>
            <person name="Hauser L."/>
            <person name="Kyrpides N."/>
            <person name="Kim E."/>
            <person name="Lovley D."/>
            <person name="Richardson P."/>
        </authorList>
    </citation>
    <scope>NUCLEOTIDE SEQUENCE [LARGE SCALE GENOMIC DNA]</scope>
    <source>
        <strain>DSM 2379 / NBRC 103807 / OttBd1</strain>
    </source>
</reference>
<dbReference type="EC" id="1.17.7.4" evidence="1"/>
<dbReference type="EMBL" id="CP000482">
    <property type="protein sequence ID" value="ABK98969.1"/>
    <property type="molecule type" value="Genomic_DNA"/>
</dbReference>
<dbReference type="RefSeq" id="WP_011735262.1">
    <property type="nucleotide sequence ID" value="NC_008609.1"/>
</dbReference>
<dbReference type="SMR" id="A1ANP9"/>
<dbReference type="STRING" id="338966.Ppro_1349"/>
<dbReference type="KEGG" id="ppd:Ppro_1349"/>
<dbReference type="eggNOG" id="COG0761">
    <property type="taxonomic scope" value="Bacteria"/>
</dbReference>
<dbReference type="HOGENOM" id="CLU_027486_0_1_7"/>
<dbReference type="OrthoDB" id="9804068at2"/>
<dbReference type="UniPathway" id="UPA00056">
    <property type="reaction ID" value="UER00097"/>
</dbReference>
<dbReference type="UniPathway" id="UPA00059">
    <property type="reaction ID" value="UER00105"/>
</dbReference>
<dbReference type="Proteomes" id="UP000006732">
    <property type="component" value="Chromosome"/>
</dbReference>
<dbReference type="GO" id="GO:0051539">
    <property type="term" value="F:4 iron, 4 sulfur cluster binding"/>
    <property type="evidence" value="ECO:0007669"/>
    <property type="project" value="UniProtKB-UniRule"/>
</dbReference>
<dbReference type="GO" id="GO:0051745">
    <property type="term" value="F:4-hydroxy-3-methylbut-2-enyl diphosphate reductase activity"/>
    <property type="evidence" value="ECO:0007669"/>
    <property type="project" value="UniProtKB-UniRule"/>
</dbReference>
<dbReference type="GO" id="GO:0046872">
    <property type="term" value="F:metal ion binding"/>
    <property type="evidence" value="ECO:0007669"/>
    <property type="project" value="UniProtKB-KW"/>
</dbReference>
<dbReference type="GO" id="GO:0050992">
    <property type="term" value="P:dimethylallyl diphosphate biosynthetic process"/>
    <property type="evidence" value="ECO:0007669"/>
    <property type="project" value="UniProtKB-UniRule"/>
</dbReference>
<dbReference type="GO" id="GO:0019288">
    <property type="term" value="P:isopentenyl diphosphate biosynthetic process, methylerythritol 4-phosphate pathway"/>
    <property type="evidence" value="ECO:0007669"/>
    <property type="project" value="UniProtKB-UniRule"/>
</dbReference>
<dbReference type="GO" id="GO:0016114">
    <property type="term" value="P:terpenoid biosynthetic process"/>
    <property type="evidence" value="ECO:0007669"/>
    <property type="project" value="UniProtKB-UniRule"/>
</dbReference>
<dbReference type="CDD" id="cd13944">
    <property type="entry name" value="lytB_ispH"/>
    <property type="match status" value="1"/>
</dbReference>
<dbReference type="Gene3D" id="3.40.50.11270">
    <property type="match status" value="1"/>
</dbReference>
<dbReference type="Gene3D" id="3.40.1010.20">
    <property type="entry name" value="4-hydroxy-3-methylbut-2-enyl diphosphate reductase, catalytic domain"/>
    <property type="match status" value="2"/>
</dbReference>
<dbReference type="HAMAP" id="MF_00191">
    <property type="entry name" value="IspH"/>
    <property type="match status" value="1"/>
</dbReference>
<dbReference type="InterPro" id="IPR003451">
    <property type="entry name" value="LytB/IspH"/>
</dbReference>
<dbReference type="NCBIfam" id="TIGR00216">
    <property type="entry name" value="ispH_lytB"/>
    <property type="match status" value="1"/>
</dbReference>
<dbReference type="NCBIfam" id="NF002187">
    <property type="entry name" value="PRK01045.1-1"/>
    <property type="match status" value="1"/>
</dbReference>
<dbReference type="PANTHER" id="PTHR30426">
    <property type="entry name" value="4-HYDROXY-3-METHYLBUT-2-ENYL DIPHOSPHATE REDUCTASE"/>
    <property type="match status" value="1"/>
</dbReference>
<dbReference type="PANTHER" id="PTHR30426:SF0">
    <property type="entry name" value="4-HYDROXY-3-METHYLBUT-2-ENYL DIPHOSPHATE REDUCTASE"/>
    <property type="match status" value="1"/>
</dbReference>
<dbReference type="Pfam" id="PF02401">
    <property type="entry name" value="LYTB"/>
    <property type="match status" value="1"/>
</dbReference>
<protein>
    <recommendedName>
        <fullName evidence="1">4-hydroxy-3-methylbut-2-enyl diphosphate reductase</fullName>
        <shortName evidence="1">HMBPP reductase</shortName>
        <ecNumber evidence="1">1.17.7.4</ecNumber>
    </recommendedName>
</protein>